<proteinExistence type="inferred from homology"/>
<dbReference type="EC" id="3.4.-.-" evidence="6"/>
<dbReference type="EMBL" id="GG698906">
    <property type="protein sequence ID" value="EEU42122.1"/>
    <property type="molecule type" value="Genomic_DNA"/>
</dbReference>
<dbReference type="RefSeq" id="XP_003047835.1">
    <property type="nucleotide sequence ID" value="XM_003047789.1"/>
</dbReference>
<dbReference type="SMR" id="C7Z274"/>
<dbReference type="FunCoup" id="C7Z274">
    <property type="interactions" value="4"/>
</dbReference>
<dbReference type="STRING" id="660122.C7Z274"/>
<dbReference type="EnsemblFungi" id="NechaT96958">
    <property type="protein sequence ID" value="NechaP96958"/>
    <property type="gene ID" value="NechaG96958"/>
</dbReference>
<dbReference type="GeneID" id="9671620"/>
<dbReference type="KEGG" id="nhe:NECHADRAFT_96958"/>
<dbReference type="VEuPathDB" id="FungiDB:NECHADRAFT_96958"/>
<dbReference type="eggNOG" id="KOG2194">
    <property type="taxonomic scope" value="Eukaryota"/>
</dbReference>
<dbReference type="HOGENOM" id="CLU_006412_1_0_1"/>
<dbReference type="InParanoid" id="C7Z274"/>
<dbReference type="OMA" id="FCHTFVN"/>
<dbReference type="OrthoDB" id="76293at2759"/>
<dbReference type="Proteomes" id="UP000005206">
    <property type="component" value="Unassembled WGS sequence"/>
</dbReference>
<dbReference type="GO" id="GO:0005774">
    <property type="term" value="C:vacuolar membrane"/>
    <property type="evidence" value="ECO:0007669"/>
    <property type="project" value="UniProtKB-SubCell"/>
</dbReference>
<dbReference type="GO" id="GO:0046872">
    <property type="term" value="F:metal ion binding"/>
    <property type="evidence" value="ECO:0007669"/>
    <property type="project" value="UniProtKB-KW"/>
</dbReference>
<dbReference type="GO" id="GO:0008235">
    <property type="term" value="F:metalloexopeptidase activity"/>
    <property type="evidence" value="ECO:0007669"/>
    <property type="project" value="InterPro"/>
</dbReference>
<dbReference type="GO" id="GO:0006508">
    <property type="term" value="P:proteolysis"/>
    <property type="evidence" value="ECO:0007669"/>
    <property type="project" value="UniProtKB-KW"/>
</dbReference>
<dbReference type="CDD" id="cd03875">
    <property type="entry name" value="M28_Fxna_like"/>
    <property type="match status" value="1"/>
</dbReference>
<dbReference type="Gene3D" id="3.40.630.10">
    <property type="entry name" value="Zn peptidases"/>
    <property type="match status" value="1"/>
</dbReference>
<dbReference type="InterPro" id="IPR048024">
    <property type="entry name" value="Fxna-like_M28_dom"/>
</dbReference>
<dbReference type="InterPro" id="IPR045175">
    <property type="entry name" value="M28_fam"/>
</dbReference>
<dbReference type="InterPro" id="IPR007484">
    <property type="entry name" value="Peptidase_M28"/>
</dbReference>
<dbReference type="InterPro" id="IPR053975">
    <property type="entry name" value="PFF1_C"/>
</dbReference>
<dbReference type="InterPro" id="IPR053976">
    <property type="entry name" value="PFF1_TM"/>
</dbReference>
<dbReference type="PANTHER" id="PTHR12147">
    <property type="entry name" value="METALLOPEPTIDASE M28 FAMILY MEMBER"/>
    <property type="match status" value="1"/>
</dbReference>
<dbReference type="PANTHER" id="PTHR12147:SF58">
    <property type="entry name" value="VACUOLAR MEMBRANE PROTEASE"/>
    <property type="match status" value="1"/>
</dbReference>
<dbReference type="Pfam" id="PF04389">
    <property type="entry name" value="Peptidase_M28"/>
    <property type="match status" value="1"/>
</dbReference>
<dbReference type="Pfam" id="PF22250">
    <property type="entry name" value="PFF1_C"/>
    <property type="match status" value="1"/>
</dbReference>
<dbReference type="Pfam" id="PF22251">
    <property type="entry name" value="PFF1_TM"/>
    <property type="match status" value="1"/>
</dbReference>
<dbReference type="SUPFAM" id="SSF53187">
    <property type="entry name" value="Zn-dependent exopeptidases"/>
    <property type="match status" value="1"/>
</dbReference>
<comment type="function">
    <text evidence="1">May be involved in vacuolar sorting and osmoregulation.</text>
</comment>
<comment type="cofactor">
    <cofactor evidence="2">
        <name>Zn(2+)</name>
        <dbReference type="ChEBI" id="CHEBI:29105"/>
    </cofactor>
    <text evidence="2">Binds 2 Zn(2+) ions per subunit.</text>
</comment>
<comment type="subcellular location">
    <subcellularLocation>
        <location evidence="1">Vacuole membrane</location>
        <topology evidence="3">Multi-pass membrane protein</topology>
    </subcellularLocation>
</comment>
<comment type="similarity">
    <text evidence="6">Belongs to the peptidase M28 family.</text>
</comment>
<protein>
    <recommendedName>
        <fullName evidence="1">Vacuolar membrane protease</fullName>
        <ecNumber evidence="6">3.4.-.-</ecNumber>
    </recommendedName>
    <alternativeName>
        <fullName evidence="1">FXNA-related family protease 1</fullName>
    </alternativeName>
</protein>
<feature type="chain" id="PRO_0000411725" description="Vacuolar membrane protease">
    <location>
        <begin position="1"/>
        <end position="1032"/>
    </location>
</feature>
<feature type="topological domain" description="Cytoplasmic" evidence="1">
    <location>
        <begin position="1"/>
        <end position="11"/>
    </location>
</feature>
<feature type="transmembrane region" description="Helical; Name=1" evidence="3">
    <location>
        <begin position="12"/>
        <end position="32"/>
    </location>
</feature>
<feature type="topological domain" description="Vacuolar" evidence="1">
    <location>
        <begin position="33"/>
        <end position="426"/>
    </location>
</feature>
<feature type="transmembrane region" description="Helical; Name=2" evidence="3">
    <location>
        <begin position="427"/>
        <end position="447"/>
    </location>
</feature>
<feature type="topological domain" description="Cytoplasmic" evidence="1">
    <location>
        <begin position="448"/>
        <end position="482"/>
    </location>
</feature>
<feature type="transmembrane region" description="Helical; Name=3" evidence="3">
    <location>
        <begin position="483"/>
        <end position="503"/>
    </location>
</feature>
<feature type="topological domain" description="Vacuolar" evidence="1">
    <location>
        <begin position="504"/>
        <end position="511"/>
    </location>
</feature>
<feature type="transmembrane region" description="Helical; Name=4" evidence="3">
    <location>
        <begin position="512"/>
        <end position="532"/>
    </location>
</feature>
<feature type="topological domain" description="Cytoplasmic" evidence="1">
    <location>
        <begin position="533"/>
        <end position="545"/>
    </location>
</feature>
<feature type="transmembrane region" description="Helical; Name=5" evidence="3">
    <location>
        <begin position="546"/>
        <end position="566"/>
    </location>
</feature>
<feature type="topological domain" description="Vacuolar" evidence="1">
    <location>
        <begin position="567"/>
        <end position="573"/>
    </location>
</feature>
<feature type="transmembrane region" description="Helical; Name=6" evidence="3">
    <location>
        <begin position="574"/>
        <end position="594"/>
    </location>
</feature>
<feature type="topological domain" description="Cytoplasmic" evidence="1">
    <location>
        <begin position="595"/>
        <end position="708"/>
    </location>
</feature>
<feature type="transmembrane region" description="Helical; Name=7" evidence="3">
    <location>
        <begin position="709"/>
        <end position="729"/>
    </location>
</feature>
<feature type="topological domain" description="Vacuolar" evidence="1">
    <location>
        <begin position="730"/>
        <end position="745"/>
    </location>
</feature>
<feature type="transmembrane region" description="Helical; Name=8" evidence="3">
    <location>
        <begin position="746"/>
        <end position="766"/>
    </location>
</feature>
<feature type="topological domain" description="Cytoplasmic" evidence="1">
    <location>
        <begin position="767"/>
        <end position="773"/>
    </location>
</feature>
<feature type="transmembrane region" description="Helical; Name=9" evidence="3">
    <location>
        <begin position="774"/>
        <end position="794"/>
    </location>
</feature>
<feature type="topological domain" description="Vacuolar" evidence="1">
    <location>
        <begin position="795"/>
        <end position="1032"/>
    </location>
</feature>
<feature type="region of interest" description="Disordered" evidence="5">
    <location>
        <begin position="616"/>
        <end position="666"/>
    </location>
</feature>
<feature type="compositionally biased region" description="Basic and acidic residues" evidence="5">
    <location>
        <begin position="616"/>
        <end position="631"/>
    </location>
</feature>
<feature type="compositionally biased region" description="Acidic residues" evidence="5">
    <location>
        <begin position="632"/>
        <end position="649"/>
    </location>
</feature>
<feature type="active site" description="Proton acceptor" evidence="2">
    <location>
        <position position="253"/>
    </location>
</feature>
<feature type="binding site" evidence="2">
    <location>
        <position position="207"/>
    </location>
    <ligand>
        <name>Zn(2+)</name>
        <dbReference type="ChEBI" id="CHEBI:29105"/>
        <label>1</label>
        <note>catalytic</note>
    </ligand>
</feature>
<feature type="binding site" evidence="2">
    <location>
        <position position="219"/>
    </location>
    <ligand>
        <name>Zn(2+)</name>
        <dbReference type="ChEBI" id="CHEBI:29105"/>
        <label>1</label>
        <note>catalytic</note>
    </ligand>
</feature>
<feature type="binding site" evidence="2">
    <location>
        <position position="219"/>
    </location>
    <ligand>
        <name>Zn(2+)</name>
        <dbReference type="ChEBI" id="CHEBI:29105"/>
        <label>2</label>
        <note>catalytic</note>
    </ligand>
</feature>
<feature type="binding site" evidence="2">
    <location>
        <position position="254"/>
    </location>
    <ligand>
        <name>Zn(2+)</name>
        <dbReference type="ChEBI" id="CHEBI:29105"/>
        <label>2</label>
        <note>catalytic</note>
    </ligand>
</feature>
<feature type="binding site" evidence="2">
    <location>
        <position position="279"/>
    </location>
    <ligand>
        <name>Zn(2+)</name>
        <dbReference type="ChEBI" id="CHEBI:29105"/>
        <label>1</label>
        <note>catalytic</note>
    </ligand>
</feature>
<feature type="binding site" evidence="2">
    <location>
        <position position="352"/>
    </location>
    <ligand>
        <name>Zn(2+)</name>
        <dbReference type="ChEBI" id="CHEBI:29105"/>
        <label>2</label>
        <note>catalytic</note>
    </ligand>
</feature>
<feature type="site" description="Transition state stabilizer" evidence="2">
    <location>
        <position position="351"/>
    </location>
</feature>
<feature type="glycosylation site" description="N-linked (GlcNAc...) asparagine" evidence="4">
    <location>
        <position position="50"/>
    </location>
</feature>
<feature type="glycosylation site" description="N-linked (GlcNAc...) asparagine" evidence="4">
    <location>
        <position position="142"/>
    </location>
</feature>
<feature type="glycosylation site" description="N-linked (GlcNAc...) asparagine" evidence="4">
    <location>
        <position position="812"/>
    </location>
</feature>
<feature type="glycosylation site" description="N-linked (GlcNAc...) asparagine" evidence="4">
    <location>
        <position position="884"/>
    </location>
</feature>
<gene>
    <name type="ORF">NECHADRAFT_96958</name>
</gene>
<name>PFF1_FUSV7</name>
<reference key="1">
    <citation type="journal article" date="2009" name="PLoS Genet.">
        <title>The genome of Nectria haematococca: contribution of supernumerary chromosomes to gene expansion.</title>
        <authorList>
            <person name="Coleman J.J."/>
            <person name="Rounsley S.D."/>
            <person name="Rodriguez-Carres M."/>
            <person name="Kuo A."/>
            <person name="Wasmann C.C."/>
            <person name="Grimwood J."/>
            <person name="Schmutz J."/>
            <person name="Taga M."/>
            <person name="White G.J."/>
            <person name="Zhou S."/>
            <person name="Schwartz D.C."/>
            <person name="Freitag M."/>
            <person name="Ma L.-J."/>
            <person name="Danchin E.G.J."/>
            <person name="Henrissat B."/>
            <person name="Coutinho P.M."/>
            <person name="Nelson D.R."/>
            <person name="Straney D."/>
            <person name="Napoli C.A."/>
            <person name="Barker B.M."/>
            <person name="Gribskov M."/>
            <person name="Rep M."/>
            <person name="Kroken S."/>
            <person name="Molnar I."/>
            <person name="Rensing C."/>
            <person name="Kennell J.C."/>
            <person name="Zamora J."/>
            <person name="Farman M.L."/>
            <person name="Selker E.U."/>
            <person name="Salamov A."/>
            <person name="Shapiro H."/>
            <person name="Pangilinan J."/>
            <person name="Lindquist E."/>
            <person name="Lamers C."/>
            <person name="Grigoriev I.V."/>
            <person name="Geiser D.M."/>
            <person name="Covert S.F."/>
            <person name="Temporini E."/>
            <person name="VanEtten H.D."/>
        </authorList>
    </citation>
    <scope>NUCLEOTIDE SEQUENCE [LARGE SCALE GENOMIC DNA]</scope>
    <source>
        <strain>ATCC MYA-4622 / CBS 123669 / FGSC 9596 / NRRL 45880 / 77-13-4</strain>
    </source>
</reference>
<accession>C7Z274</accession>
<sequence>MRFQNPFAFRPGPVSFWTTVIYLALVIPLIYVHETVPPAPSDRSLYQGLNLTEAWLDLQTISRAFHPYNSHENDVVRQFLIDRTKEILDRNSMPYTTETIGGVDWHTRNAFVQTQDSDLNPRDEFIQSRPRGATLFDDKISNVTWTYNTARPTGTNIAKGTWMGQYFEGNNYYVYIHGKDDPEGEWWRSESAYKKFRGQGGVLVNCHFDSVSTGYGATDDGMSCVSMLQLLSYFTLQGRQPKNGIVLLFNNAEEDGLLGARAFGYSPLLHFTHTFVNLEGAGAGGRAILFRTTDLQAAKVYAKSPHPFGSVVAANAFERGVIKSATDYEIFADIFGQRGMDIAFYAPRARYHTNQDDTRHTSVNSIWHMLSAALASTERFSQITGTTFHGDRSDGKSDLVQNGKKAEGVWFDIFGSAWAVFALRGLFAWSLTLLVATPLILVAITYILARKDKYYFFSRDIKMHHDINDDPVVLGGWKGFLRFPFALVFAGALTIASTLLLAKFNPLIIYSSPYAVWSMTLSIFYFSFWLIMRGASFIRPSALHRGYVLIWLFALGWGLQVVGAVAEDRLHIAALYATVFLQSAVFLALFISLLEQFALLGKHDFAMQLHDAHQARDISSHGTDHESRPQPEEEPAQPEGDEDESEDATETTPLRANEPGYGSSTRTSFAATYRRSVADNAPSPPRMRRYQPYEHEQSWSGRLPSWTWIIQFLLLAPVPVILFGNLGLVAMSALQMTGTDGGSLLVPVLTLGIVSIFLLLPLTPFIHRVSHHVPMFLLCVFAGTFIYNLVAFPFSDSHRFKFYFQQVVDLDNGTDTVSIVGLERFSRSVIKSLPSASSQDIKCEKAVGRDLMECLYDSSSLSPHLVEGKTPRELITFETVDGTNASKGRLRIDALDSRLCYLHTSRPIYGFAVDGGAARDPRFGGFPSEGFKTIQLWRRDRDRPWTVNLYLDEHSQQADKSFEGEHKKLGDGSVVHRRADDPLEVTVRCAWSDANKPGTIPALDELLKYMPTWAAVTKKNVGLVEVRKTYKV</sequence>
<organism>
    <name type="scientific">Fusarium vanettenii (strain ATCC MYA-4622 / CBS 123669 / FGSC 9596 / NRRL 45880 / 77-13-4)</name>
    <name type="common">Fusarium solani subsp. pisi</name>
    <dbReference type="NCBI Taxonomy" id="660122"/>
    <lineage>
        <taxon>Eukaryota</taxon>
        <taxon>Fungi</taxon>
        <taxon>Dikarya</taxon>
        <taxon>Ascomycota</taxon>
        <taxon>Pezizomycotina</taxon>
        <taxon>Sordariomycetes</taxon>
        <taxon>Hypocreomycetidae</taxon>
        <taxon>Hypocreales</taxon>
        <taxon>Nectriaceae</taxon>
        <taxon>Fusarium</taxon>
        <taxon>Fusarium solani species complex</taxon>
        <taxon>Fusarium vanettenii</taxon>
    </lineage>
</organism>
<evidence type="ECO:0000250" key="1">
    <source>
        <dbReference type="UniProtKB" id="P38244"/>
    </source>
</evidence>
<evidence type="ECO:0000250" key="2">
    <source>
        <dbReference type="UniProtKB" id="P80561"/>
    </source>
</evidence>
<evidence type="ECO:0000255" key="3"/>
<evidence type="ECO:0000255" key="4">
    <source>
        <dbReference type="PROSITE-ProRule" id="PRU00498"/>
    </source>
</evidence>
<evidence type="ECO:0000256" key="5">
    <source>
        <dbReference type="SAM" id="MobiDB-lite"/>
    </source>
</evidence>
<evidence type="ECO:0000305" key="6"/>
<keyword id="KW-0325">Glycoprotein</keyword>
<keyword id="KW-0378">Hydrolase</keyword>
<keyword id="KW-0472">Membrane</keyword>
<keyword id="KW-0479">Metal-binding</keyword>
<keyword id="KW-0482">Metalloprotease</keyword>
<keyword id="KW-0645">Protease</keyword>
<keyword id="KW-1185">Reference proteome</keyword>
<keyword id="KW-0812">Transmembrane</keyword>
<keyword id="KW-1133">Transmembrane helix</keyword>
<keyword id="KW-0926">Vacuole</keyword>
<keyword id="KW-0862">Zinc</keyword>